<sequence length="488" mass="54099">MDQSVQERTRIKNERYESGVIPYAKMGYWDPDYAIKATDVLALFRVTPQPGVDPVEAAAAIAGESSTATWTVVWTDLLTACDLYRAKAYRVDPVPSSPDQYFAYIAYDIDLFEEGSIANLTASIIGNVFGFKAVKALRLEDMRIPVAYLKTFQGPATGVVVERERMNNFGRPLLGATVKPKLGLSGKNYGRVVYEGLKGGLDFLKDDENINSQPFMRWRERFLFCMEGVNRASASSGEVKGHYLNVTAATMEDMYERAEFSKEVGSIICMIDLVIGYTAIQSMAKWARKNDMILHLHRAGNSTYSRQKNHGMNFRVICKWMRMAGVDHIHAGTVVGKLEGDPLMIKGFYNTLLEPHLNINLPEGLFFEQNWASLRKVMPVASGGIHCGQMHQLIDYLGDDVVLQFGGGTIGHPDGIQAGATANRVALESMLLARNEGRDYVAQGPQILRDAAKTCGPLQTALDLWKDISFNYTSTDTADFVQTPTANV</sequence>
<dbReference type="EC" id="4.1.1.39" evidence="1"/>
<dbReference type="EMBL" id="X17597">
    <property type="protein sequence ID" value="CAB58236.1"/>
    <property type="molecule type" value="Genomic_DNA"/>
</dbReference>
<dbReference type="PIR" id="A48330">
    <property type="entry name" value="A48330"/>
</dbReference>
<dbReference type="RefSeq" id="YP_010330126.1">
    <property type="nucleotide sequence ID" value="NC_062300.1"/>
</dbReference>
<dbReference type="SMR" id="Q09119"/>
<dbReference type="GeneID" id="71712554"/>
<dbReference type="GO" id="GO:0009507">
    <property type="term" value="C:chloroplast"/>
    <property type="evidence" value="ECO:0007669"/>
    <property type="project" value="UniProtKB-SubCell"/>
</dbReference>
<dbReference type="GO" id="GO:0000287">
    <property type="term" value="F:magnesium ion binding"/>
    <property type="evidence" value="ECO:0007669"/>
    <property type="project" value="UniProtKB-UniRule"/>
</dbReference>
<dbReference type="GO" id="GO:0004497">
    <property type="term" value="F:monooxygenase activity"/>
    <property type="evidence" value="ECO:0007669"/>
    <property type="project" value="UniProtKB-KW"/>
</dbReference>
<dbReference type="GO" id="GO:0016984">
    <property type="term" value="F:ribulose-bisphosphate carboxylase activity"/>
    <property type="evidence" value="ECO:0007669"/>
    <property type="project" value="UniProtKB-UniRule"/>
</dbReference>
<dbReference type="GO" id="GO:0019253">
    <property type="term" value="P:reductive pentose-phosphate cycle"/>
    <property type="evidence" value="ECO:0007669"/>
    <property type="project" value="UniProtKB-UniRule"/>
</dbReference>
<dbReference type="CDD" id="cd08212">
    <property type="entry name" value="RuBisCO_large_I"/>
    <property type="match status" value="1"/>
</dbReference>
<dbReference type="Gene3D" id="3.20.20.110">
    <property type="entry name" value="Ribulose bisphosphate carboxylase, large subunit, C-terminal domain"/>
    <property type="match status" value="1"/>
</dbReference>
<dbReference type="Gene3D" id="3.30.70.150">
    <property type="entry name" value="RuBisCO large subunit, N-terminal domain"/>
    <property type="match status" value="1"/>
</dbReference>
<dbReference type="HAMAP" id="MF_01338">
    <property type="entry name" value="RuBisCO_L_type1"/>
    <property type="match status" value="1"/>
</dbReference>
<dbReference type="InterPro" id="IPR033966">
    <property type="entry name" value="RuBisCO"/>
</dbReference>
<dbReference type="InterPro" id="IPR020878">
    <property type="entry name" value="RuBisCo_large_chain_AS"/>
</dbReference>
<dbReference type="InterPro" id="IPR000685">
    <property type="entry name" value="RuBisCO_lsu_C"/>
</dbReference>
<dbReference type="InterPro" id="IPR036376">
    <property type="entry name" value="RuBisCO_lsu_C_sf"/>
</dbReference>
<dbReference type="InterPro" id="IPR017443">
    <property type="entry name" value="RuBisCO_lsu_fd_N"/>
</dbReference>
<dbReference type="InterPro" id="IPR036422">
    <property type="entry name" value="RuBisCO_lsu_N_sf"/>
</dbReference>
<dbReference type="InterPro" id="IPR020888">
    <property type="entry name" value="RuBisCO_lsuI"/>
</dbReference>
<dbReference type="NCBIfam" id="NF003252">
    <property type="entry name" value="PRK04208.1"/>
    <property type="match status" value="1"/>
</dbReference>
<dbReference type="PANTHER" id="PTHR42704">
    <property type="entry name" value="RIBULOSE BISPHOSPHATE CARBOXYLASE"/>
    <property type="match status" value="1"/>
</dbReference>
<dbReference type="PANTHER" id="PTHR42704:SF17">
    <property type="entry name" value="RIBULOSE BISPHOSPHATE CARBOXYLASE LARGE CHAIN"/>
    <property type="match status" value="1"/>
</dbReference>
<dbReference type="Pfam" id="PF00016">
    <property type="entry name" value="RuBisCO_large"/>
    <property type="match status" value="1"/>
</dbReference>
<dbReference type="Pfam" id="PF02788">
    <property type="entry name" value="RuBisCO_large_N"/>
    <property type="match status" value="1"/>
</dbReference>
<dbReference type="SFLD" id="SFLDG01052">
    <property type="entry name" value="RuBisCO"/>
    <property type="match status" value="1"/>
</dbReference>
<dbReference type="SFLD" id="SFLDS00014">
    <property type="entry name" value="RuBisCO"/>
    <property type="match status" value="1"/>
</dbReference>
<dbReference type="SFLD" id="SFLDG00301">
    <property type="entry name" value="RuBisCO-like_proteins"/>
    <property type="match status" value="1"/>
</dbReference>
<dbReference type="SUPFAM" id="SSF51649">
    <property type="entry name" value="RuBisCo, C-terminal domain"/>
    <property type="match status" value="1"/>
</dbReference>
<dbReference type="SUPFAM" id="SSF54966">
    <property type="entry name" value="RuBisCO, large subunit, small (N-terminal) domain"/>
    <property type="match status" value="1"/>
</dbReference>
<dbReference type="PROSITE" id="PS00157">
    <property type="entry name" value="RUBISCO_LARGE"/>
    <property type="match status" value="1"/>
</dbReference>
<reference key="1">
    <citation type="journal article" date="1989" name="Curr. Genet.">
        <title>The genes of both subunits of ribulose-1,5-bisphosphate carboxylase constitute an operon on the plastome of a red alga.</title>
        <authorList>
            <person name="Valentin K.-U."/>
            <person name="Zetsche K."/>
        </authorList>
    </citation>
    <scope>NUCLEOTIDE SEQUENCE [GENOMIC DNA]</scope>
</reference>
<comment type="function">
    <text evidence="1">RuBisCO catalyzes two reactions: the carboxylation of D-ribulose 1,5-bisphosphate, the primary event in carbon dioxide fixation, as well as the oxidative fragmentation of the pentose substrate in the photorespiration process. Both reactions occur simultaneously and in competition at the same active site.</text>
</comment>
<comment type="catalytic activity">
    <reaction evidence="1">
        <text>2 (2R)-3-phosphoglycerate + 2 H(+) = D-ribulose 1,5-bisphosphate + CO2 + H2O</text>
        <dbReference type="Rhea" id="RHEA:23124"/>
        <dbReference type="ChEBI" id="CHEBI:15377"/>
        <dbReference type="ChEBI" id="CHEBI:15378"/>
        <dbReference type="ChEBI" id="CHEBI:16526"/>
        <dbReference type="ChEBI" id="CHEBI:57870"/>
        <dbReference type="ChEBI" id="CHEBI:58272"/>
        <dbReference type="EC" id="4.1.1.39"/>
    </reaction>
</comment>
<comment type="catalytic activity">
    <reaction evidence="1">
        <text>D-ribulose 1,5-bisphosphate + O2 = 2-phosphoglycolate + (2R)-3-phosphoglycerate + 2 H(+)</text>
        <dbReference type="Rhea" id="RHEA:36631"/>
        <dbReference type="ChEBI" id="CHEBI:15378"/>
        <dbReference type="ChEBI" id="CHEBI:15379"/>
        <dbReference type="ChEBI" id="CHEBI:57870"/>
        <dbReference type="ChEBI" id="CHEBI:58033"/>
        <dbReference type="ChEBI" id="CHEBI:58272"/>
    </reaction>
</comment>
<comment type="cofactor">
    <cofactor evidence="1">
        <name>Mg(2+)</name>
        <dbReference type="ChEBI" id="CHEBI:18420"/>
    </cofactor>
    <text evidence="1">Binds 1 Mg(2+) ion per subunit.</text>
</comment>
<comment type="subunit">
    <text evidence="1">Heterohexadecamer of 8 large chains and 8 small chains.</text>
</comment>
<comment type="subcellular location">
    <subcellularLocation>
        <location>Plastid</location>
        <location>Chloroplast</location>
    </subcellularLocation>
</comment>
<comment type="miscellaneous">
    <text evidence="1">The basic functional RuBisCO is composed of a large chain homodimer in a 'head-to-tail' conformation. In form I RuBisCO this homodimer is arranged in a barrel-like tetramer with the small subunits forming a tetrameric 'cap' on each end of the 'barrel'.</text>
</comment>
<comment type="similarity">
    <text evidence="1">Belongs to the RuBisCO large chain family. Type I subfamily.</text>
</comment>
<gene>
    <name evidence="1" type="primary">rbcL</name>
</gene>
<accession>Q09119</accession>
<name>RBL_PORAE</name>
<evidence type="ECO:0000255" key="1">
    <source>
        <dbReference type="HAMAP-Rule" id="MF_01338"/>
    </source>
</evidence>
<proteinExistence type="inferred from homology"/>
<geneLocation type="chloroplast"/>
<protein>
    <recommendedName>
        <fullName evidence="1">Ribulose bisphosphate carboxylase large chain</fullName>
        <shortName evidence="1">RuBisCO large subunit</shortName>
        <ecNumber evidence="1">4.1.1.39</ecNumber>
    </recommendedName>
</protein>
<organism>
    <name type="scientific">Porphyridium aerugineum</name>
    <name type="common">Red microalga</name>
    <dbReference type="NCBI Taxonomy" id="2792"/>
    <lineage>
        <taxon>Eukaryota</taxon>
        <taxon>Rhodophyta</taxon>
        <taxon>Bangiophyceae</taxon>
        <taxon>Porphyridiales</taxon>
        <taxon>Porphyridiaceae</taxon>
        <taxon>Porphyridium</taxon>
    </lineage>
</organism>
<keyword id="KW-0113">Calvin cycle</keyword>
<keyword id="KW-0120">Carbon dioxide fixation</keyword>
<keyword id="KW-0150">Chloroplast</keyword>
<keyword id="KW-0456">Lyase</keyword>
<keyword id="KW-0460">Magnesium</keyword>
<keyword id="KW-0479">Metal-binding</keyword>
<keyword id="KW-0503">Monooxygenase</keyword>
<keyword id="KW-0560">Oxidoreductase</keyword>
<keyword id="KW-0601">Photorespiration</keyword>
<keyword id="KW-0602">Photosynthesis</keyword>
<keyword id="KW-0934">Plastid</keyword>
<feature type="chain" id="PRO_0000062572" description="Ribulose bisphosphate carboxylase large chain">
    <location>
        <begin position="1"/>
        <end position="488"/>
    </location>
</feature>
<feature type="active site" description="Proton acceptor" evidence="1">
    <location>
        <position position="179"/>
    </location>
</feature>
<feature type="active site" description="Proton acceptor" evidence="1">
    <location>
        <position position="297"/>
    </location>
</feature>
<feature type="binding site" description="in homodimeric partner" evidence="1">
    <location>
        <position position="127"/>
    </location>
    <ligand>
        <name>substrate</name>
    </ligand>
</feature>
<feature type="binding site" evidence="1">
    <location>
        <position position="177"/>
    </location>
    <ligand>
        <name>substrate</name>
    </ligand>
</feature>
<feature type="binding site" evidence="1">
    <location>
        <position position="181"/>
    </location>
    <ligand>
        <name>substrate</name>
    </ligand>
</feature>
<feature type="binding site" description="via carbamate group" evidence="1">
    <location>
        <position position="205"/>
    </location>
    <ligand>
        <name>Mg(2+)</name>
        <dbReference type="ChEBI" id="CHEBI:18420"/>
    </ligand>
</feature>
<feature type="binding site" evidence="1">
    <location>
        <position position="207"/>
    </location>
    <ligand>
        <name>Mg(2+)</name>
        <dbReference type="ChEBI" id="CHEBI:18420"/>
    </ligand>
</feature>
<feature type="binding site" evidence="1">
    <location>
        <position position="208"/>
    </location>
    <ligand>
        <name>Mg(2+)</name>
        <dbReference type="ChEBI" id="CHEBI:18420"/>
    </ligand>
</feature>
<feature type="binding site" evidence="1">
    <location>
        <position position="298"/>
    </location>
    <ligand>
        <name>substrate</name>
    </ligand>
</feature>
<feature type="binding site" evidence="1">
    <location>
        <position position="330"/>
    </location>
    <ligand>
        <name>substrate</name>
    </ligand>
</feature>
<feature type="binding site" evidence="1">
    <location>
        <position position="382"/>
    </location>
    <ligand>
        <name>substrate</name>
    </ligand>
</feature>
<feature type="site" description="Transition state stabilizer" evidence="1">
    <location>
        <position position="337"/>
    </location>
</feature>
<feature type="modified residue" description="N6-carboxylysine" evidence="1">
    <location>
        <position position="205"/>
    </location>
</feature>